<protein>
    <recommendedName>
        <fullName>Imidazolonepropionase</fullName>
        <ecNumber>3.5.2.7</ecNumber>
    </recommendedName>
    <alternativeName>
        <fullName>Imidazolone-5-propionate hydrolase</fullName>
    </alternativeName>
</protein>
<proteinExistence type="inferred from homology"/>
<comment type="function">
    <text evidence="2">Catalyzes the hydrolytic cleavage of the carbon-nitrogen bond in imidazolone-5-propanoate to yield N-formimidoyl-L-glutamate. It is the third step in the universal histidine degradation pathway.</text>
</comment>
<comment type="catalytic activity">
    <reaction>
        <text>4-imidazolone-5-propanoate + H2O = N-formimidoyl-L-glutamate</text>
        <dbReference type="Rhea" id="RHEA:23660"/>
        <dbReference type="ChEBI" id="CHEBI:15377"/>
        <dbReference type="ChEBI" id="CHEBI:58928"/>
        <dbReference type="ChEBI" id="CHEBI:77893"/>
        <dbReference type="EC" id="3.5.2.7"/>
    </reaction>
</comment>
<comment type="cofactor">
    <cofactor evidence="1">
        <name>Zn(2+)</name>
        <dbReference type="ChEBI" id="CHEBI:29105"/>
    </cofactor>
    <cofactor evidence="1">
        <name>Fe(3+)</name>
        <dbReference type="ChEBI" id="CHEBI:29034"/>
    </cofactor>
    <text evidence="1">Binds 1 zinc or iron ion per subunit.</text>
</comment>
<comment type="pathway">
    <text>Amino-acid degradation; L-histidine degradation into L-glutamate; N-formimidoyl-L-glutamate from L-histidine: step 3/3.</text>
</comment>
<comment type="subcellular location">
    <subcellularLocation>
        <location evidence="4">Cytoplasm</location>
    </subcellularLocation>
</comment>
<comment type="similarity">
    <text evidence="4">Belongs to the metallo-dependent hydrolases superfamily. HutI family.</text>
</comment>
<reference key="1">
    <citation type="journal article" date="2005" name="Nucleic Acids Res.">
        <title>The genome sequence of Xanthomonas oryzae pathovar oryzae KACC10331, the bacterial blight pathogen of rice.</title>
        <authorList>
            <person name="Lee B.-M."/>
            <person name="Park Y.-J."/>
            <person name="Park D.-S."/>
            <person name="Kang H.-W."/>
            <person name="Kim J.-G."/>
            <person name="Song E.-S."/>
            <person name="Park I.-C."/>
            <person name="Yoon U.-H."/>
            <person name="Hahn J.-H."/>
            <person name="Koo B.-S."/>
            <person name="Lee G.-B."/>
            <person name="Kim H."/>
            <person name="Park H.-S."/>
            <person name="Yoon K.-O."/>
            <person name="Kim J.-H."/>
            <person name="Jung C.-H."/>
            <person name="Koh N.-H."/>
            <person name="Seo J.-S."/>
            <person name="Go S.-J."/>
        </authorList>
    </citation>
    <scope>NUCLEOTIDE SEQUENCE [LARGE SCALE GENOMIC DNA]</scope>
    <source>
        <strain>KACC10331 / KXO85</strain>
    </source>
</reference>
<accession>Q5H071</accession>
<keyword id="KW-0963">Cytoplasm</keyword>
<keyword id="KW-0369">Histidine metabolism</keyword>
<keyword id="KW-0378">Hydrolase</keyword>
<keyword id="KW-0408">Iron</keyword>
<keyword id="KW-0479">Metal-binding</keyword>
<keyword id="KW-1185">Reference proteome</keyword>
<keyword id="KW-0862">Zinc</keyword>
<gene>
    <name type="primary">hutI</name>
    <name type="ordered locus">XOO2396</name>
</gene>
<organism>
    <name type="scientific">Xanthomonas oryzae pv. oryzae (strain KACC10331 / KXO85)</name>
    <dbReference type="NCBI Taxonomy" id="291331"/>
    <lineage>
        <taxon>Bacteria</taxon>
        <taxon>Pseudomonadati</taxon>
        <taxon>Pseudomonadota</taxon>
        <taxon>Gammaproteobacteria</taxon>
        <taxon>Lysobacterales</taxon>
        <taxon>Lysobacteraceae</taxon>
        <taxon>Xanthomonas</taxon>
    </lineage>
</organism>
<feature type="chain" id="PRO_0000306538" description="Imidazolonepropionase">
    <location>
        <begin position="1"/>
        <end position="879"/>
    </location>
</feature>
<feature type="region of interest" description="Unknown">
    <location>
        <begin position="1"/>
        <end position="478"/>
    </location>
</feature>
<feature type="region of interest" description="Disordered" evidence="3">
    <location>
        <begin position="1"/>
        <end position="32"/>
    </location>
</feature>
<feature type="region of interest" description="Imidazolonepropionase">
    <location>
        <begin position="479"/>
        <end position="879"/>
    </location>
</feature>
<feature type="binding site" evidence="2">
    <location>
        <position position="548"/>
    </location>
    <ligand>
        <name>Fe(3+)</name>
        <dbReference type="ChEBI" id="CHEBI:29034"/>
    </ligand>
</feature>
<feature type="binding site" evidence="2">
    <location>
        <position position="548"/>
    </location>
    <ligand>
        <name>Zn(2+)</name>
        <dbReference type="ChEBI" id="CHEBI:29105"/>
    </ligand>
</feature>
<feature type="binding site" evidence="2">
    <location>
        <position position="550"/>
    </location>
    <ligand>
        <name>Fe(3+)</name>
        <dbReference type="ChEBI" id="CHEBI:29034"/>
    </ligand>
</feature>
<feature type="binding site" evidence="2">
    <location>
        <position position="550"/>
    </location>
    <ligand>
        <name>Zn(2+)</name>
        <dbReference type="ChEBI" id="CHEBI:29105"/>
    </ligand>
</feature>
<feature type="binding site" evidence="2">
    <location>
        <position position="557"/>
    </location>
    <ligand>
        <name>4-imidazolone-5-propanoate</name>
        <dbReference type="ChEBI" id="CHEBI:77893"/>
    </ligand>
</feature>
<feature type="binding site" evidence="2">
    <location>
        <position position="620"/>
    </location>
    <ligand>
        <name>4-imidazolone-5-propanoate</name>
        <dbReference type="ChEBI" id="CHEBI:77893"/>
    </ligand>
</feature>
<feature type="binding site" evidence="2">
    <location>
        <position position="620"/>
    </location>
    <ligand>
        <name>N-formimidoyl-L-glutamate</name>
        <dbReference type="ChEBI" id="CHEBI:58928"/>
    </ligand>
</feature>
<feature type="binding site" evidence="2">
    <location>
        <position position="653"/>
    </location>
    <ligand>
        <name>4-imidazolone-5-propanoate</name>
        <dbReference type="ChEBI" id="CHEBI:77893"/>
    </ligand>
</feature>
<feature type="binding site" evidence="2">
    <location>
        <position position="716"/>
    </location>
    <ligand>
        <name>Fe(3+)</name>
        <dbReference type="ChEBI" id="CHEBI:29034"/>
    </ligand>
</feature>
<feature type="binding site" evidence="2">
    <location>
        <position position="716"/>
    </location>
    <ligand>
        <name>Zn(2+)</name>
        <dbReference type="ChEBI" id="CHEBI:29105"/>
    </ligand>
</feature>
<feature type="binding site" evidence="2">
    <location>
        <position position="719"/>
    </location>
    <ligand>
        <name>4-imidazolone-5-propanoate</name>
        <dbReference type="ChEBI" id="CHEBI:77893"/>
    </ligand>
</feature>
<feature type="binding site" evidence="2">
    <location>
        <position position="791"/>
    </location>
    <ligand>
        <name>Fe(3+)</name>
        <dbReference type="ChEBI" id="CHEBI:29034"/>
    </ligand>
</feature>
<feature type="binding site" evidence="2">
    <location>
        <position position="791"/>
    </location>
    <ligand>
        <name>Zn(2+)</name>
        <dbReference type="ChEBI" id="CHEBI:29105"/>
    </ligand>
</feature>
<feature type="binding site" evidence="2">
    <location>
        <position position="793"/>
    </location>
    <ligand>
        <name>N-formimidoyl-L-glutamate</name>
        <dbReference type="ChEBI" id="CHEBI:58928"/>
    </ligand>
</feature>
<feature type="binding site" evidence="2">
    <location>
        <position position="795"/>
    </location>
    <ligand>
        <name>N-formimidoyl-L-glutamate</name>
        <dbReference type="ChEBI" id="CHEBI:58928"/>
    </ligand>
</feature>
<feature type="binding site" evidence="2">
    <location>
        <position position="796"/>
    </location>
    <ligand>
        <name>4-imidazolone-5-propanoate</name>
        <dbReference type="ChEBI" id="CHEBI:77893"/>
    </ligand>
</feature>
<sequence length="879" mass="94673">MSCVQQAAQHRSKPRGNTRAIGMPPIAHHPAPAAPDIAYRRATRGEQPAVYQGVVVARQQGRMRCVQLDQISRGTGTDAGVRNAQRLRGTNAGLIVEPASAGYSTLRHYIARLQRQALAVFEQAQFFGCIDQHIRIRAHAEASARRGKCPHREHAVAQIRLGDRAQTDDRAAGDDRLQFVRIHVRGVHQTPARIHRRVGQQPLHRTLPGPGQAGIHFTLLFGDMDVDGAIGERHQRRQLRRGDRTQAVRRQPKHRIRQRFQAVSAVVQQACETIDAVNQAALRRAGSGTAEIRMRIEHRQQAETDAGVGGRGGDALGHFAGMRVRRTAHGVVQIVEFADAGEAAFEHFHIRLFGDRLQAVRIEPVDEAVHQLAPAPEAVAAASADFGQPRHAALEGMAVQIAQARQQHVAARVGQGSSGTGLQRGDAALLCRDPHPARPAVGQQRPGGPEHLHLLVSHWTPSIAELIVYTYQTPRACAMHCDVLWHNAQLMTLDAADGGLGIVDDGTVACQQGRIVYAGPAAQAPALQPHATHDCQRRWISPGLIDCHTHLVYAGNRANEFEQRLRGASYADIAAAGGGIVATVRATRAADDAALLAASLPRLDAMLGEGVTTLEIKSGYGLTLDDEIKQLRVARQLAALRKVEVVPTFLGAHAVPPGGDAQRYTDQVCTQMIPAIAAQGLAEAVDVFCEHLAFSHAQAEQVFIAAQAHGLHIKIHAEQLSNQHGAELAARYGALSADHIEYLDQAGIAAMAGAGTVAVLLPGAFYFTRDTQVPPIAALRAAGVPLALATDCNPGTSPLTSPLLAMNMAATLFRMTVDECIAGFTREAARALGRSERLGRLRAGMDCDLAIWDIDAPADLVYRMGFNPLHARVLRGHLC</sequence>
<evidence type="ECO:0000250" key="1"/>
<evidence type="ECO:0000255" key="2">
    <source>
        <dbReference type="HAMAP-Rule" id="MF_00372"/>
    </source>
</evidence>
<evidence type="ECO:0000256" key="3">
    <source>
        <dbReference type="SAM" id="MobiDB-lite"/>
    </source>
</evidence>
<evidence type="ECO:0000305" key="4"/>
<dbReference type="EC" id="3.5.2.7"/>
<dbReference type="EMBL" id="AE013598">
    <property type="protein sequence ID" value="AAW75650.1"/>
    <property type="molecule type" value="Genomic_DNA"/>
</dbReference>
<dbReference type="SMR" id="Q5H071"/>
<dbReference type="STRING" id="291331.XOO2396"/>
<dbReference type="KEGG" id="xoo:XOO2396"/>
<dbReference type="HOGENOM" id="CLU_327306_0_0_6"/>
<dbReference type="UniPathway" id="UPA00379">
    <property type="reaction ID" value="UER00551"/>
</dbReference>
<dbReference type="Proteomes" id="UP000006735">
    <property type="component" value="Chromosome"/>
</dbReference>
<dbReference type="GO" id="GO:0005737">
    <property type="term" value="C:cytoplasm"/>
    <property type="evidence" value="ECO:0007669"/>
    <property type="project" value="UniProtKB-SubCell"/>
</dbReference>
<dbReference type="GO" id="GO:0050480">
    <property type="term" value="F:imidazolonepropionase activity"/>
    <property type="evidence" value="ECO:0007669"/>
    <property type="project" value="UniProtKB-UniRule"/>
</dbReference>
<dbReference type="GO" id="GO:0005506">
    <property type="term" value="F:iron ion binding"/>
    <property type="evidence" value="ECO:0007669"/>
    <property type="project" value="UniProtKB-UniRule"/>
</dbReference>
<dbReference type="GO" id="GO:0008270">
    <property type="term" value="F:zinc ion binding"/>
    <property type="evidence" value="ECO:0007669"/>
    <property type="project" value="UniProtKB-UniRule"/>
</dbReference>
<dbReference type="GO" id="GO:0019556">
    <property type="term" value="P:L-histidine catabolic process to glutamate and formamide"/>
    <property type="evidence" value="ECO:0007669"/>
    <property type="project" value="UniProtKB-UniPathway"/>
</dbReference>
<dbReference type="GO" id="GO:0019557">
    <property type="term" value="P:L-histidine catabolic process to glutamate and formate"/>
    <property type="evidence" value="ECO:0007669"/>
    <property type="project" value="UniProtKB-UniPathway"/>
</dbReference>
<dbReference type="FunFam" id="3.20.20.140:FF:000007">
    <property type="entry name" value="Imidazolonepropionase"/>
    <property type="match status" value="1"/>
</dbReference>
<dbReference type="Gene3D" id="3.20.20.140">
    <property type="entry name" value="Metal-dependent hydrolases"/>
    <property type="match status" value="1"/>
</dbReference>
<dbReference type="Gene3D" id="2.30.40.10">
    <property type="entry name" value="Urease, subunit C, domain 1"/>
    <property type="match status" value="1"/>
</dbReference>
<dbReference type="HAMAP" id="MF_00372">
    <property type="entry name" value="HutI"/>
    <property type="match status" value="1"/>
</dbReference>
<dbReference type="InterPro" id="IPR013108">
    <property type="entry name" value="Amidohydro_3"/>
</dbReference>
<dbReference type="InterPro" id="IPR005920">
    <property type="entry name" value="HutI"/>
</dbReference>
<dbReference type="InterPro" id="IPR011059">
    <property type="entry name" value="Metal-dep_hydrolase_composite"/>
</dbReference>
<dbReference type="InterPro" id="IPR032466">
    <property type="entry name" value="Metal_Hydrolase"/>
</dbReference>
<dbReference type="NCBIfam" id="TIGR01224">
    <property type="entry name" value="hutI"/>
    <property type="match status" value="1"/>
</dbReference>
<dbReference type="PANTHER" id="PTHR42752">
    <property type="entry name" value="IMIDAZOLONEPROPIONASE"/>
    <property type="match status" value="1"/>
</dbReference>
<dbReference type="PANTHER" id="PTHR42752:SF1">
    <property type="entry name" value="IMIDAZOLONEPROPIONASE-RELATED"/>
    <property type="match status" value="1"/>
</dbReference>
<dbReference type="Pfam" id="PF07969">
    <property type="entry name" value="Amidohydro_3"/>
    <property type="match status" value="1"/>
</dbReference>
<dbReference type="SUPFAM" id="SSF51338">
    <property type="entry name" value="Composite domain of metallo-dependent hydrolases"/>
    <property type="match status" value="1"/>
</dbReference>
<dbReference type="SUPFAM" id="SSF51556">
    <property type="entry name" value="Metallo-dependent hydrolases"/>
    <property type="match status" value="1"/>
</dbReference>
<name>HUTI_XANOR</name>